<proteinExistence type="evidence at protein level"/>
<dbReference type="EMBL" id="AK153766">
    <property type="protein sequence ID" value="BAE32177.1"/>
    <property type="molecule type" value="mRNA"/>
</dbReference>
<dbReference type="EMBL" id="AL772347">
    <property type="status" value="NOT_ANNOTATED_CDS"/>
    <property type="molecule type" value="Genomic_DNA"/>
</dbReference>
<dbReference type="EMBL" id="BC032969">
    <property type="protein sequence ID" value="AAH32969.1"/>
    <property type="molecule type" value="mRNA"/>
</dbReference>
<dbReference type="EMBL" id="BC053443">
    <property type="protein sequence ID" value="AAH53443.1"/>
    <property type="molecule type" value="mRNA"/>
</dbReference>
<dbReference type="EMBL" id="AB455263">
    <property type="protein sequence ID" value="BAO05265.1"/>
    <property type="molecule type" value="mRNA"/>
</dbReference>
<dbReference type="CCDS" id="CCDS16724.1">
    <molecule id="Q7TS74-1"/>
</dbReference>
<dbReference type="RefSeq" id="NP_853620.1">
    <molecule id="Q7TS74-1"/>
    <property type="nucleotide sequence ID" value="NM_181589.3"/>
</dbReference>
<dbReference type="SMR" id="Q7TS74"/>
<dbReference type="BioGRID" id="214073">
    <property type="interactions" value="1"/>
</dbReference>
<dbReference type="FunCoup" id="Q7TS74">
    <property type="interactions" value="708"/>
</dbReference>
<dbReference type="STRING" id="10090.ENSMUSP00000056145"/>
<dbReference type="GlyGen" id="Q7TS74">
    <property type="glycosylation" value="5 sites, 1 O-linked glycan (3 sites)"/>
</dbReference>
<dbReference type="iPTMnet" id="Q7TS74"/>
<dbReference type="PhosphoSitePlus" id="Q7TS74"/>
<dbReference type="PaxDb" id="10090-ENSMUSP00000056145"/>
<dbReference type="PeptideAtlas" id="Q7TS74"/>
<dbReference type="ProteomicsDB" id="283515">
    <molecule id="Q7TS74-1"/>
</dbReference>
<dbReference type="ProteomicsDB" id="283516">
    <molecule id="Q7TS74-2"/>
</dbReference>
<dbReference type="Pumba" id="Q7TS74"/>
<dbReference type="Antibodypedia" id="33290">
    <property type="antibodies" value="71 antibodies from 15 providers"/>
</dbReference>
<dbReference type="DNASU" id="70466"/>
<dbReference type="Ensembl" id="ENSMUST00000052708.7">
    <molecule id="Q7TS74-1"/>
    <property type="protein sequence ID" value="ENSMUSP00000056145.7"/>
    <property type="gene ID" value="ENSMUSG00000048327.7"/>
</dbReference>
<dbReference type="GeneID" id="70466"/>
<dbReference type="KEGG" id="mmu:70466"/>
<dbReference type="UCSC" id="uc008mho.2">
    <molecule id="Q7TS74-1"/>
    <property type="organism name" value="mouse"/>
</dbReference>
<dbReference type="UCSC" id="uc008mhp.2">
    <molecule id="Q7TS74-2"/>
    <property type="organism name" value="mouse"/>
</dbReference>
<dbReference type="AGR" id="MGI:1917716"/>
<dbReference type="CTD" id="150468"/>
<dbReference type="MGI" id="MGI:1917716">
    <property type="gene designation" value="Ckap2l"/>
</dbReference>
<dbReference type="VEuPathDB" id="HostDB:ENSMUSG00000048327"/>
<dbReference type="eggNOG" id="ENOG502RZUT">
    <property type="taxonomic scope" value="Eukaryota"/>
</dbReference>
<dbReference type="GeneTree" id="ENSGT00530000063691"/>
<dbReference type="HOGENOM" id="CLU_022701_0_0_1"/>
<dbReference type="InParanoid" id="Q7TS74"/>
<dbReference type="OMA" id="QKSTQPC"/>
<dbReference type="OrthoDB" id="6288182at2759"/>
<dbReference type="PhylomeDB" id="Q7TS74"/>
<dbReference type="TreeFam" id="TF333003"/>
<dbReference type="BioGRID-ORCS" id="70466">
    <property type="hits" value="6 hits in 77 CRISPR screens"/>
</dbReference>
<dbReference type="ChiTaRS" id="Ckap2l">
    <property type="organism name" value="mouse"/>
</dbReference>
<dbReference type="PRO" id="PR:Q7TS74"/>
<dbReference type="Proteomes" id="UP000000589">
    <property type="component" value="Chromosome 2"/>
</dbReference>
<dbReference type="RNAct" id="Q7TS74">
    <property type="molecule type" value="protein"/>
</dbReference>
<dbReference type="Bgee" id="ENSMUSG00000048327">
    <property type="expression patterns" value="Expressed in ear vesicle and 168 other cell types or tissues"/>
</dbReference>
<dbReference type="GO" id="GO:0005813">
    <property type="term" value="C:centrosome"/>
    <property type="evidence" value="ECO:0007669"/>
    <property type="project" value="Ensembl"/>
</dbReference>
<dbReference type="GO" id="GO:0005929">
    <property type="term" value="C:cilium"/>
    <property type="evidence" value="ECO:0007669"/>
    <property type="project" value="Ensembl"/>
</dbReference>
<dbReference type="GO" id="GO:0005829">
    <property type="term" value="C:cytosol"/>
    <property type="evidence" value="ECO:0007669"/>
    <property type="project" value="Ensembl"/>
</dbReference>
<dbReference type="GO" id="GO:0072686">
    <property type="term" value="C:mitotic spindle"/>
    <property type="evidence" value="ECO:0007669"/>
    <property type="project" value="Ensembl"/>
</dbReference>
<dbReference type="GO" id="GO:0000922">
    <property type="term" value="C:spindle pole"/>
    <property type="evidence" value="ECO:0007669"/>
    <property type="project" value="UniProtKB-SubCell"/>
</dbReference>
<dbReference type="InterPro" id="IPR052855">
    <property type="entry name" value="CKAP2-like"/>
</dbReference>
<dbReference type="InterPro" id="IPR029197">
    <property type="entry name" value="CKAP2_C"/>
</dbReference>
<dbReference type="PANTHER" id="PTHR47078">
    <property type="entry name" value="CYTOSKELETON-ASSOCIATED PROTEIN 2-LIKE"/>
    <property type="match status" value="1"/>
</dbReference>
<dbReference type="PANTHER" id="PTHR47078:SF1">
    <property type="entry name" value="CYTOSKELETON-ASSOCIATED PROTEIN 2-LIKE"/>
    <property type="match status" value="1"/>
</dbReference>
<dbReference type="Pfam" id="PF15297">
    <property type="entry name" value="CKAP2_C"/>
    <property type="match status" value="2"/>
</dbReference>
<feature type="chain" id="PRO_0000324336" description="Cytoskeleton-associated protein 2-like">
    <location>
        <begin position="1"/>
        <end position="745"/>
    </location>
</feature>
<feature type="region of interest" description="Disordered" evidence="2">
    <location>
        <begin position="26"/>
        <end position="305"/>
    </location>
</feature>
<feature type="region of interest" description="Disordered" evidence="2">
    <location>
        <begin position="319"/>
        <end position="362"/>
    </location>
</feature>
<feature type="region of interest" description="Disordered" evidence="2">
    <location>
        <begin position="422"/>
        <end position="483"/>
    </location>
</feature>
<feature type="region of interest" description="Disordered" evidence="2">
    <location>
        <begin position="608"/>
        <end position="638"/>
    </location>
</feature>
<feature type="short sequence motif" description="KEN box">
    <location>
        <begin position="183"/>
        <end position="185"/>
    </location>
</feature>
<feature type="compositionally biased region" description="Polar residues" evidence="2">
    <location>
        <begin position="67"/>
        <end position="89"/>
    </location>
</feature>
<feature type="compositionally biased region" description="Polar residues" evidence="2">
    <location>
        <begin position="101"/>
        <end position="136"/>
    </location>
</feature>
<feature type="compositionally biased region" description="Basic and acidic residues" evidence="2">
    <location>
        <begin position="192"/>
        <end position="202"/>
    </location>
</feature>
<feature type="compositionally biased region" description="Polar residues" evidence="2">
    <location>
        <begin position="205"/>
        <end position="216"/>
    </location>
</feature>
<feature type="compositionally biased region" description="Polar residues" evidence="2">
    <location>
        <begin position="224"/>
        <end position="233"/>
    </location>
</feature>
<feature type="compositionally biased region" description="Polar residues" evidence="2">
    <location>
        <begin position="242"/>
        <end position="253"/>
    </location>
</feature>
<feature type="compositionally biased region" description="Polar residues" evidence="2">
    <location>
        <begin position="284"/>
        <end position="301"/>
    </location>
</feature>
<feature type="compositionally biased region" description="Polar residues" evidence="2">
    <location>
        <begin position="427"/>
        <end position="442"/>
    </location>
</feature>
<feature type="compositionally biased region" description="Basic and acidic residues" evidence="2">
    <location>
        <begin position="459"/>
        <end position="475"/>
    </location>
</feature>
<feature type="compositionally biased region" description="Polar residues" evidence="2">
    <location>
        <begin position="608"/>
        <end position="624"/>
    </location>
</feature>
<feature type="modified residue" description="Phosphoserine" evidence="1">
    <location>
        <position position="745"/>
    </location>
</feature>
<feature type="cross-link" description="Glycyl lysine isopeptide (Lys-Gly) (interchain with G-Cter in SUMO1); alternate" evidence="1">
    <location>
        <position position="195"/>
    </location>
</feature>
<feature type="cross-link" description="Glycyl lysine isopeptide (Lys-Gly) (interchain with G-Cter in SUMO2); alternate" evidence="1">
    <location>
        <position position="195"/>
    </location>
</feature>
<feature type="splice variant" id="VSP_032221" description="In isoform 2." evidence="5">
    <original>PVQELQEVLNVLQDPCRSTEAVTSDTSAAGT</original>
    <variation>VSICLRWLMSNSPLWASFVAYSYGSTLHC</variation>
    <location>
        <begin position="589"/>
        <end position="619"/>
    </location>
</feature>
<feature type="splice variant" id="VSP_032222" description="In isoform 2." evidence="5">
    <location>
        <begin position="620"/>
        <end position="745"/>
    </location>
</feature>
<feature type="mutagenesis site" description="Drastically enhances protein stability." evidence="3">
    <original>KEN</original>
    <variation>AAA</variation>
    <location>
        <begin position="183"/>
        <end position="185"/>
    </location>
</feature>
<feature type="sequence conflict" description="In Ref. 1; BAE32177." evidence="6" ref="1">
    <original>P</original>
    <variation>Q</variation>
    <location>
        <position position="456"/>
    </location>
</feature>
<feature type="sequence conflict" description="In Ref. 4; BAO05265." evidence="6" ref="4">
    <original>Q</original>
    <variation>H</variation>
    <location>
        <position position="634"/>
    </location>
</feature>
<feature type="sequence conflict" description="In Ref. 3; AAH32969." evidence="6" ref="3">
    <original>APR</original>
    <variation>PQ</variation>
    <location>
        <begin position="649"/>
        <end position="651"/>
    </location>
</feature>
<feature type="sequence conflict" description="In Ref. 3; AAH32969." evidence="6" ref="3">
    <original>H</original>
    <variation>P</variation>
    <location>
        <position position="660"/>
    </location>
</feature>
<accession>Q7TS74</accession>
<accession>Q3U5A3</accession>
<accession>Q8K264</accession>
<accession>U6C6D6</accession>
<reference key="1">
    <citation type="journal article" date="2005" name="Science">
        <title>The transcriptional landscape of the mammalian genome.</title>
        <authorList>
            <person name="Carninci P."/>
            <person name="Kasukawa T."/>
            <person name="Katayama S."/>
            <person name="Gough J."/>
            <person name="Frith M.C."/>
            <person name="Maeda N."/>
            <person name="Oyama R."/>
            <person name="Ravasi T."/>
            <person name="Lenhard B."/>
            <person name="Wells C."/>
            <person name="Kodzius R."/>
            <person name="Shimokawa K."/>
            <person name="Bajic V.B."/>
            <person name="Brenner S.E."/>
            <person name="Batalov S."/>
            <person name="Forrest A.R."/>
            <person name="Zavolan M."/>
            <person name="Davis M.J."/>
            <person name="Wilming L.G."/>
            <person name="Aidinis V."/>
            <person name="Allen J.E."/>
            <person name="Ambesi-Impiombato A."/>
            <person name="Apweiler R."/>
            <person name="Aturaliya R.N."/>
            <person name="Bailey T.L."/>
            <person name="Bansal M."/>
            <person name="Baxter L."/>
            <person name="Beisel K.W."/>
            <person name="Bersano T."/>
            <person name="Bono H."/>
            <person name="Chalk A.M."/>
            <person name="Chiu K.P."/>
            <person name="Choudhary V."/>
            <person name="Christoffels A."/>
            <person name="Clutterbuck D.R."/>
            <person name="Crowe M.L."/>
            <person name="Dalla E."/>
            <person name="Dalrymple B.P."/>
            <person name="de Bono B."/>
            <person name="Della Gatta G."/>
            <person name="di Bernardo D."/>
            <person name="Down T."/>
            <person name="Engstrom P."/>
            <person name="Fagiolini M."/>
            <person name="Faulkner G."/>
            <person name="Fletcher C.F."/>
            <person name="Fukushima T."/>
            <person name="Furuno M."/>
            <person name="Futaki S."/>
            <person name="Gariboldi M."/>
            <person name="Georgii-Hemming P."/>
            <person name="Gingeras T.R."/>
            <person name="Gojobori T."/>
            <person name="Green R.E."/>
            <person name="Gustincich S."/>
            <person name="Harbers M."/>
            <person name="Hayashi Y."/>
            <person name="Hensch T.K."/>
            <person name="Hirokawa N."/>
            <person name="Hill D."/>
            <person name="Huminiecki L."/>
            <person name="Iacono M."/>
            <person name="Ikeo K."/>
            <person name="Iwama A."/>
            <person name="Ishikawa T."/>
            <person name="Jakt M."/>
            <person name="Kanapin A."/>
            <person name="Katoh M."/>
            <person name="Kawasawa Y."/>
            <person name="Kelso J."/>
            <person name="Kitamura H."/>
            <person name="Kitano H."/>
            <person name="Kollias G."/>
            <person name="Krishnan S.P."/>
            <person name="Kruger A."/>
            <person name="Kummerfeld S.K."/>
            <person name="Kurochkin I.V."/>
            <person name="Lareau L.F."/>
            <person name="Lazarevic D."/>
            <person name="Lipovich L."/>
            <person name="Liu J."/>
            <person name="Liuni S."/>
            <person name="McWilliam S."/>
            <person name="Madan Babu M."/>
            <person name="Madera M."/>
            <person name="Marchionni L."/>
            <person name="Matsuda H."/>
            <person name="Matsuzawa S."/>
            <person name="Miki H."/>
            <person name="Mignone F."/>
            <person name="Miyake S."/>
            <person name="Morris K."/>
            <person name="Mottagui-Tabar S."/>
            <person name="Mulder N."/>
            <person name="Nakano N."/>
            <person name="Nakauchi H."/>
            <person name="Ng P."/>
            <person name="Nilsson R."/>
            <person name="Nishiguchi S."/>
            <person name="Nishikawa S."/>
            <person name="Nori F."/>
            <person name="Ohara O."/>
            <person name="Okazaki Y."/>
            <person name="Orlando V."/>
            <person name="Pang K.C."/>
            <person name="Pavan W.J."/>
            <person name="Pavesi G."/>
            <person name="Pesole G."/>
            <person name="Petrovsky N."/>
            <person name="Piazza S."/>
            <person name="Reed J."/>
            <person name="Reid J.F."/>
            <person name="Ring B.Z."/>
            <person name="Ringwald M."/>
            <person name="Rost B."/>
            <person name="Ruan Y."/>
            <person name="Salzberg S.L."/>
            <person name="Sandelin A."/>
            <person name="Schneider C."/>
            <person name="Schoenbach C."/>
            <person name="Sekiguchi K."/>
            <person name="Semple C.A."/>
            <person name="Seno S."/>
            <person name="Sessa L."/>
            <person name="Sheng Y."/>
            <person name="Shibata Y."/>
            <person name="Shimada H."/>
            <person name="Shimada K."/>
            <person name="Silva D."/>
            <person name="Sinclair B."/>
            <person name="Sperling S."/>
            <person name="Stupka E."/>
            <person name="Sugiura K."/>
            <person name="Sultana R."/>
            <person name="Takenaka Y."/>
            <person name="Taki K."/>
            <person name="Tammoja K."/>
            <person name="Tan S.L."/>
            <person name="Tang S."/>
            <person name="Taylor M.S."/>
            <person name="Tegner J."/>
            <person name="Teichmann S.A."/>
            <person name="Ueda H.R."/>
            <person name="van Nimwegen E."/>
            <person name="Verardo R."/>
            <person name="Wei C.L."/>
            <person name="Yagi K."/>
            <person name="Yamanishi H."/>
            <person name="Zabarovsky E."/>
            <person name="Zhu S."/>
            <person name="Zimmer A."/>
            <person name="Hide W."/>
            <person name="Bult C."/>
            <person name="Grimmond S.M."/>
            <person name="Teasdale R.D."/>
            <person name="Liu E.T."/>
            <person name="Brusic V."/>
            <person name="Quackenbush J."/>
            <person name="Wahlestedt C."/>
            <person name="Mattick J.S."/>
            <person name="Hume D.A."/>
            <person name="Kai C."/>
            <person name="Sasaki D."/>
            <person name="Tomaru Y."/>
            <person name="Fukuda S."/>
            <person name="Kanamori-Katayama M."/>
            <person name="Suzuki M."/>
            <person name="Aoki J."/>
            <person name="Arakawa T."/>
            <person name="Iida J."/>
            <person name="Imamura K."/>
            <person name="Itoh M."/>
            <person name="Kato T."/>
            <person name="Kawaji H."/>
            <person name="Kawagashira N."/>
            <person name="Kawashima T."/>
            <person name="Kojima M."/>
            <person name="Kondo S."/>
            <person name="Konno H."/>
            <person name="Nakano K."/>
            <person name="Ninomiya N."/>
            <person name="Nishio T."/>
            <person name="Okada M."/>
            <person name="Plessy C."/>
            <person name="Shibata K."/>
            <person name="Shiraki T."/>
            <person name="Suzuki S."/>
            <person name="Tagami M."/>
            <person name="Waki K."/>
            <person name="Watahiki A."/>
            <person name="Okamura-Oho Y."/>
            <person name="Suzuki H."/>
            <person name="Kawai J."/>
            <person name="Hayashizaki Y."/>
        </authorList>
    </citation>
    <scope>NUCLEOTIDE SEQUENCE [LARGE SCALE MRNA] (ISOFORMS 1 AND 2)</scope>
    <source>
        <strain>C57BL/6J</strain>
        <tissue>Thymus</tissue>
    </source>
</reference>
<reference key="2">
    <citation type="journal article" date="2009" name="PLoS Biol.">
        <title>Lineage-specific biology revealed by a finished genome assembly of the mouse.</title>
        <authorList>
            <person name="Church D.M."/>
            <person name="Goodstadt L."/>
            <person name="Hillier L.W."/>
            <person name="Zody M.C."/>
            <person name="Goldstein S."/>
            <person name="She X."/>
            <person name="Bult C.J."/>
            <person name="Agarwala R."/>
            <person name="Cherry J.L."/>
            <person name="DiCuccio M."/>
            <person name="Hlavina W."/>
            <person name="Kapustin Y."/>
            <person name="Meric P."/>
            <person name="Maglott D."/>
            <person name="Birtle Z."/>
            <person name="Marques A.C."/>
            <person name="Graves T."/>
            <person name="Zhou S."/>
            <person name="Teague B."/>
            <person name="Potamousis K."/>
            <person name="Churas C."/>
            <person name="Place M."/>
            <person name="Herschleb J."/>
            <person name="Runnheim R."/>
            <person name="Forrest D."/>
            <person name="Amos-Landgraf J."/>
            <person name="Schwartz D.C."/>
            <person name="Cheng Z."/>
            <person name="Lindblad-Toh K."/>
            <person name="Eichler E.E."/>
            <person name="Ponting C.P."/>
        </authorList>
    </citation>
    <scope>NUCLEOTIDE SEQUENCE [LARGE SCALE GENOMIC DNA]</scope>
    <source>
        <strain>C57BL/6J</strain>
    </source>
</reference>
<reference key="3">
    <citation type="journal article" date="2004" name="Genome Res.">
        <title>The status, quality, and expansion of the NIH full-length cDNA project: the Mammalian Gene Collection (MGC).</title>
        <authorList>
            <consortium name="The MGC Project Team"/>
        </authorList>
    </citation>
    <scope>NUCLEOTIDE SEQUENCE [LARGE SCALE MRNA] (ISOFORM 1)</scope>
    <source>
        <strain>C57BL/6J</strain>
        <tissue>Embryo</tissue>
        <tissue>Mammary gland</tissue>
    </source>
</reference>
<reference key="4">
    <citation type="journal article" date="2013" name="PLoS ONE">
        <title>Radmis, a novel mitotic spindle protein that functions in cell division of neural progenitors.</title>
        <authorList>
            <person name="Yumoto T."/>
            <person name="Nakadate K."/>
            <person name="Nakamura Y."/>
            <person name="Sugitani Y."/>
            <person name="Sugitani-Yoshida R."/>
            <person name="Ueda S."/>
            <person name="Sakakibara S."/>
        </authorList>
    </citation>
    <scope>NUCLEOTIDE SEQUENCE [MRNA] OF 590-745 (ISOFORM 1)</scope>
    <scope>FUNCTION</scope>
    <scope>SUBCELLULAR LOCATION</scope>
    <scope>MUTAGENESIS OF 183-LYS--ARG-185</scope>
    <scope>KEN BOX MOTIF</scope>
    <scope>UBIQUITINATION</scope>
    <scope>TISSUE SPECIFICITY</scope>
    <source>
        <strain>C57BL/6J</strain>
    </source>
</reference>
<reference key="5">
    <citation type="journal article" date="2014" name="Am. J. Hum. Genet.">
        <title>Mutations in CKAP2L, the human homolog of the mouse Radmis gene, cause Filippi syndrome.</title>
        <authorList>
            <person name="Hussain M.S."/>
            <person name="Battaglia A."/>
            <person name="Szczepanski S."/>
            <person name="Kaygusuz E."/>
            <person name="Toliat M.R."/>
            <person name="Sakakibara S."/>
            <person name="Altmueller J."/>
            <person name="Thiele H."/>
            <person name="Nuernberg G."/>
            <person name="Moosa S."/>
            <person name="Yigit G."/>
            <person name="Beleggia F."/>
            <person name="Tinschert S."/>
            <person name="Clayton-Smith J."/>
            <person name="Vasudevan P."/>
            <person name="Urquhart J.E."/>
            <person name="Donnai D."/>
            <person name="Fryer A."/>
            <person name="Percin F."/>
            <person name="Brancati F."/>
            <person name="Dobbie A."/>
            <person name="Smigiel R."/>
            <person name="Gillessen-Kaesbach G."/>
            <person name="Wollnik B."/>
            <person name="Noegel A.A."/>
            <person name="Newman W.G."/>
            <person name="Nuernberg P."/>
        </authorList>
    </citation>
    <scope>SUBCELLULAR LOCATION</scope>
    <scope>DEVELOPMENTAL STAGE</scope>
</reference>
<protein>
    <recommendedName>
        <fullName>Cytoskeleton-associated protein 2-like</fullName>
    </recommendedName>
    <alternativeName>
        <fullName>Radial fiber and mitotic spindle protein</fullName>
        <shortName>Radmis</shortName>
    </alternativeName>
</protein>
<name>CKP2L_MOUSE</name>
<gene>
    <name type="primary">Ckap2l</name>
</gene>
<comment type="function">
    <text evidence="3">Microtubule-associated protein required for mitotic spindle formation and cell-cycle progression in neural progenitor cells.</text>
</comment>
<comment type="subcellular location">
    <subcellularLocation>
        <location evidence="3 4">Cytoplasm</location>
        <location evidence="3 4">Cytoskeleton</location>
        <location evidence="3 4">Spindle pole</location>
    </subcellularLocation>
    <text>Uniformly distributed along each microtubule bundle of spindles in addition to centrioles during mitosis, expression promptly diminishes at interphase.</text>
</comment>
<comment type="alternative products">
    <event type="alternative splicing"/>
    <isoform>
        <id>Q7TS74-1</id>
        <name>1</name>
        <sequence type="displayed"/>
    </isoform>
    <isoform>
        <id>Q7TS74-2</id>
        <name>2</name>
        <sequence type="described" ref="VSP_032221 VSP_032222"/>
    </isoform>
</comment>
<comment type="tissue specificity">
    <text evidence="3">Highly expressed in regions of active neurogenesis and neural stem/progenitor cells (NSPCs), both embryonic and adult, not detected in lung, liver, kidney, heart, and skeletal muscle.</text>
</comment>
<comment type="developmental stage">
    <text evidence="4">At 10.5 dpc, strongly expressed in the neural progenitor cells throughout the neural tube and in the myotome. Expression is significantly lower in connective tissues compared to neural tube, but can be detected at the mitotic spindles of dividing mesenchymal cells loosely distributed in the developing limb bud. In an 12.5 dpc forelimb bud, detected in the dividing cells at the boundary region between protruding cartilage and surrounding mesenchyme (at protein level).</text>
</comment>
<comment type="domain">
    <text evidence="3">The KEN box is required for the association with the APC/C-Cdh1 complex, ubiquitination and degradation.</text>
</comment>
<comment type="PTM">
    <text evidence="3">Ubiquitinated by the anaphase promoting complex/cyclosome (APC/C).</text>
</comment>
<comment type="similarity">
    <text evidence="6">Belongs to the CKAP2 family.</text>
</comment>
<sequence>MVGPGPTASAAAEERWQKLQEYLAAKGKLKDPNAKPYLKAKNICPKPPPSKYTPGPKKDVSNHVLPSKTTRPINIKFQTKPASITASQKPESKPPKLPSRGLTSRCFSSNTDCKQSSKPQQQPRAVSFTAGLSRNPRQCPDIQELKTKQQQQAHGGNAKCTHPETNTHAAKQPVDGFPDETNKENLPQALPKPEKPDPELHSIRKPNTGSSNQTQKGLAPKQILSKSSVTQTALKDRANKQFIRNTQIRTQAVKSRPRPTVADSTRPREKPPQTAPSHSVPAHNKTQTSKKPMTKNTQDITVNRVRYGKPNETKIESCPATEQKVKHTKPSSQLNVLQGGHNSRHPNMRQDQKPVQPHLGPQTSCVLQKSRAISQRPNLTARNFNSVIPSTPNMRANKTLNNKYNNIFQQKAQTLDSKFRKFPPQSHFLNKTAPRTQASTAAASRKGAPSATQTHPHGKKPEGEDRRKQLEEWQKSKGKTYKRPPMKFKTKRKVIEEMNTSFWKSIEREEEEKKAQLELSKKIDSTLTECLRLIEEGVLPNEIFTIVSSIPEAEKFAKFWVCKAKLLASKGTFDAIGLYEEAIQNGATPVQELQEVLNVLQDPCRSTEAVTSDTSAAGTNTTSAEELAKEESEQPCPSLTEMEPIAAAAPRIPVSEWDNHGIKLQVAPIPRICGMPEVQDMKLITPVRRSARIERTVARYPEMLQEHDVVVASLNELLEVDKTECFIFRENEALPVTLGFEVLES</sequence>
<evidence type="ECO:0000250" key="1">
    <source>
        <dbReference type="UniProtKB" id="Q8IYA6"/>
    </source>
</evidence>
<evidence type="ECO:0000256" key="2">
    <source>
        <dbReference type="SAM" id="MobiDB-lite"/>
    </source>
</evidence>
<evidence type="ECO:0000269" key="3">
    <source>
    </source>
</evidence>
<evidence type="ECO:0000269" key="4">
    <source>
    </source>
</evidence>
<evidence type="ECO:0000303" key="5">
    <source>
    </source>
</evidence>
<evidence type="ECO:0000305" key="6"/>
<organism>
    <name type="scientific">Mus musculus</name>
    <name type="common">Mouse</name>
    <dbReference type="NCBI Taxonomy" id="10090"/>
    <lineage>
        <taxon>Eukaryota</taxon>
        <taxon>Metazoa</taxon>
        <taxon>Chordata</taxon>
        <taxon>Craniata</taxon>
        <taxon>Vertebrata</taxon>
        <taxon>Euteleostomi</taxon>
        <taxon>Mammalia</taxon>
        <taxon>Eutheria</taxon>
        <taxon>Euarchontoglires</taxon>
        <taxon>Glires</taxon>
        <taxon>Rodentia</taxon>
        <taxon>Myomorpha</taxon>
        <taxon>Muroidea</taxon>
        <taxon>Muridae</taxon>
        <taxon>Murinae</taxon>
        <taxon>Mus</taxon>
        <taxon>Mus</taxon>
    </lineage>
</organism>
<keyword id="KW-0025">Alternative splicing</keyword>
<keyword id="KW-0963">Cytoplasm</keyword>
<keyword id="KW-0206">Cytoskeleton</keyword>
<keyword id="KW-1017">Isopeptide bond</keyword>
<keyword id="KW-0597">Phosphoprotein</keyword>
<keyword id="KW-1185">Reference proteome</keyword>
<keyword id="KW-0832">Ubl conjugation</keyword>